<accession>A3Q3Q7</accession>
<organism>
    <name type="scientific">Mycobacterium sp. (strain JLS)</name>
    <dbReference type="NCBI Taxonomy" id="164757"/>
    <lineage>
        <taxon>Bacteria</taxon>
        <taxon>Bacillati</taxon>
        <taxon>Actinomycetota</taxon>
        <taxon>Actinomycetes</taxon>
        <taxon>Mycobacteriales</taxon>
        <taxon>Mycobacteriaceae</taxon>
        <taxon>Mycobacterium</taxon>
    </lineage>
</organism>
<feature type="chain" id="PRO_0000380101" description="Putative O-methyltransferase Mjls_4009">
    <location>
        <begin position="1"/>
        <end position="220"/>
    </location>
</feature>
<feature type="binding site" evidence="2">
    <location>
        <position position="47"/>
    </location>
    <ligand>
        <name>S-adenosyl-L-methionine</name>
        <dbReference type="ChEBI" id="CHEBI:59789"/>
    </ligand>
</feature>
<feature type="binding site" evidence="2">
    <location>
        <position position="69"/>
    </location>
    <ligand>
        <name>S-adenosyl-L-methionine</name>
        <dbReference type="ChEBI" id="CHEBI:59789"/>
    </ligand>
</feature>
<feature type="binding site" evidence="2">
    <location>
        <begin position="71"/>
        <end position="72"/>
    </location>
    <ligand>
        <name>S-adenosyl-L-methionine</name>
        <dbReference type="ChEBI" id="CHEBI:59789"/>
    </ligand>
</feature>
<feature type="binding site" evidence="2">
    <location>
        <position position="77"/>
    </location>
    <ligand>
        <name>S-adenosyl-L-methionine</name>
        <dbReference type="ChEBI" id="CHEBI:59789"/>
    </ligand>
</feature>
<feature type="binding site" evidence="2">
    <location>
        <position position="95"/>
    </location>
    <ligand>
        <name>S-adenosyl-L-methionine</name>
        <dbReference type="ChEBI" id="CHEBI:59789"/>
    </ligand>
</feature>
<feature type="binding site" evidence="2">
    <location>
        <position position="96"/>
    </location>
    <ligand>
        <name>S-adenosyl-L-methionine</name>
        <dbReference type="ChEBI" id="CHEBI:59789"/>
    </ligand>
</feature>
<feature type="binding site" evidence="1">
    <location>
        <position position="143"/>
    </location>
    <ligand>
        <name>substrate</name>
    </ligand>
</feature>
<feature type="binding site" evidence="2">
    <location>
        <position position="145"/>
    </location>
    <ligand>
        <name>S-adenosyl-L-methionine</name>
        <dbReference type="ChEBI" id="CHEBI:59789"/>
    </ligand>
</feature>
<gene>
    <name type="ordered locus">Mjls_4009</name>
</gene>
<evidence type="ECO:0000250" key="1"/>
<evidence type="ECO:0000255" key="2">
    <source>
        <dbReference type="PROSITE-ProRule" id="PRU01019"/>
    </source>
</evidence>
<evidence type="ECO:0000305" key="3"/>
<dbReference type="EC" id="2.1.1.-"/>
<dbReference type="EMBL" id="CP000580">
    <property type="protein sequence ID" value="ABN99784.1"/>
    <property type="status" value="ALT_INIT"/>
    <property type="molecule type" value="Genomic_DNA"/>
</dbReference>
<dbReference type="SMR" id="A3Q3Q7"/>
<dbReference type="KEGG" id="mjl:Mjls_4009"/>
<dbReference type="HOGENOM" id="CLU_067676_2_0_11"/>
<dbReference type="GO" id="GO:0008171">
    <property type="term" value="F:O-methyltransferase activity"/>
    <property type="evidence" value="ECO:0007669"/>
    <property type="project" value="InterPro"/>
</dbReference>
<dbReference type="GO" id="GO:0008757">
    <property type="term" value="F:S-adenosylmethionine-dependent methyltransferase activity"/>
    <property type="evidence" value="ECO:0007669"/>
    <property type="project" value="TreeGrafter"/>
</dbReference>
<dbReference type="GO" id="GO:0032259">
    <property type="term" value="P:methylation"/>
    <property type="evidence" value="ECO:0007669"/>
    <property type="project" value="UniProtKB-KW"/>
</dbReference>
<dbReference type="CDD" id="cd02440">
    <property type="entry name" value="AdoMet_MTases"/>
    <property type="match status" value="1"/>
</dbReference>
<dbReference type="Gene3D" id="3.40.50.150">
    <property type="entry name" value="Vaccinia Virus protein VP39"/>
    <property type="match status" value="1"/>
</dbReference>
<dbReference type="InterPro" id="IPR050362">
    <property type="entry name" value="Cation-dep_OMT"/>
</dbReference>
<dbReference type="InterPro" id="IPR029063">
    <property type="entry name" value="SAM-dependent_MTases_sf"/>
</dbReference>
<dbReference type="InterPro" id="IPR002935">
    <property type="entry name" value="SAM_O-MeTrfase"/>
</dbReference>
<dbReference type="PANTHER" id="PTHR10509:SF85">
    <property type="entry name" value="O-METHYLTRANSFERASE RV1220C-RELATED"/>
    <property type="match status" value="1"/>
</dbReference>
<dbReference type="PANTHER" id="PTHR10509">
    <property type="entry name" value="O-METHYLTRANSFERASE-RELATED"/>
    <property type="match status" value="1"/>
</dbReference>
<dbReference type="Pfam" id="PF01596">
    <property type="entry name" value="Methyltransf_3"/>
    <property type="match status" value="1"/>
</dbReference>
<dbReference type="SUPFAM" id="SSF53335">
    <property type="entry name" value="S-adenosyl-L-methionine-dependent methyltransferases"/>
    <property type="match status" value="1"/>
</dbReference>
<dbReference type="PROSITE" id="PS51682">
    <property type="entry name" value="SAM_OMT_I"/>
    <property type="match status" value="1"/>
</dbReference>
<keyword id="KW-0489">Methyltransferase</keyword>
<keyword id="KW-0949">S-adenosyl-L-methionine</keyword>
<keyword id="KW-0808">Transferase</keyword>
<sequence length="220" mass="22734">MASTDDPAGQRPSRAEAIVAHAEQSISEDAIVAAARERAVDIGAGAVTPAVGALLSVLARLTEAKAVVEVGTGAGVSGLWLLSGMREDGVLTTIDVEPEHQRIAKQAFIEAGIGPSRTRLISGRAQEVLTRLADESYDLVFIDGDPADQPQFVVEGVRLLRPGGAIVVHRAALGGRAGDAAANDAEVSAVREAARLIAEDERLTPVLVPLGDGLLVAARD</sequence>
<protein>
    <recommendedName>
        <fullName>Putative O-methyltransferase Mjls_4009</fullName>
        <ecNumber>2.1.1.-</ecNumber>
    </recommendedName>
</protein>
<name>Y4009_MYCSJ</name>
<reference key="1">
    <citation type="submission" date="2007-02" db="EMBL/GenBank/DDBJ databases">
        <title>Complete sequence of Mycobacterium sp. JLS.</title>
        <authorList>
            <consortium name="US DOE Joint Genome Institute"/>
            <person name="Copeland A."/>
            <person name="Lucas S."/>
            <person name="Lapidus A."/>
            <person name="Barry K."/>
            <person name="Detter J.C."/>
            <person name="Glavina del Rio T."/>
            <person name="Hammon N."/>
            <person name="Israni S."/>
            <person name="Dalin E."/>
            <person name="Tice H."/>
            <person name="Pitluck S."/>
            <person name="Chain P."/>
            <person name="Malfatti S."/>
            <person name="Shin M."/>
            <person name="Vergez L."/>
            <person name="Schmutz J."/>
            <person name="Larimer F."/>
            <person name="Land M."/>
            <person name="Hauser L."/>
            <person name="Kyrpides N."/>
            <person name="Mikhailova N."/>
            <person name="Miller C.D."/>
            <person name="Anderson A.J."/>
            <person name="Sims R.C."/>
            <person name="Richardson P."/>
        </authorList>
    </citation>
    <scope>NUCLEOTIDE SEQUENCE [LARGE SCALE GENOMIC DNA]</scope>
    <source>
        <strain>JLS</strain>
    </source>
</reference>
<proteinExistence type="inferred from homology"/>
<comment type="similarity">
    <text evidence="2">Belongs to the class I-like SAM-binding methyltransferase superfamily. Cation-dependent O-methyltransferase family.</text>
</comment>
<comment type="sequence caution" evidence="3">
    <conflict type="erroneous initiation">
        <sequence resource="EMBL-CDS" id="ABN99784"/>
    </conflict>
</comment>